<evidence type="ECO:0000255" key="1">
    <source>
        <dbReference type="HAMAP-Rule" id="MF_00029"/>
    </source>
</evidence>
<evidence type="ECO:0000256" key="2">
    <source>
        <dbReference type="SAM" id="MobiDB-lite"/>
    </source>
</evidence>
<evidence type="ECO:0000305" key="3"/>
<protein>
    <recommendedName>
        <fullName evidence="1">Small ribosomal subunit protein eS8</fullName>
    </recommendedName>
    <alternativeName>
        <fullName evidence="3">30S ribosomal protein S8e</fullName>
    </alternativeName>
</protein>
<gene>
    <name evidence="1" type="primary">rps8e</name>
    <name type="ordered locus">Smar_1247</name>
</gene>
<name>RS8E_STAMF</name>
<dbReference type="EMBL" id="CP000575">
    <property type="protein sequence ID" value="ABN70339.1"/>
    <property type="molecule type" value="Genomic_DNA"/>
</dbReference>
<dbReference type="RefSeq" id="WP_011839530.1">
    <property type="nucleotide sequence ID" value="NC_009033.1"/>
</dbReference>
<dbReference type="SMR" id="A3DNX9"/>
<dbReference type="STRING" id="399550.Smar_1247"/>
<dbReference type="GeneID" id="4907100"/>
<dbReference type="KEGG" id="smr:Smar_1247"/>
<dbReference type="eggNOG" id="arCOG04154">
    <property type="taxonomic scope" value="Archaea"/>
</dbReference>
<dbReference type="HOGENOM" id="CLU_080597_2_1_2"/>
<dbReference type="OrthoDB" id="372305at2157"/>
<dbReference type="Proteomes" id="UP000000254">
    <property type="component" value="Chromosome"/>
</dbReference>
<dbReference type="GO" id="GO:1990904">
    <property type="term" value="C:ribonucleoprotein complex"/>
    <property type="evidence" value="ECO:0007669"/>
    <property type="project" value="UniProtKB-KW"/>
</dbReference>
<dbReference type="GO" id="GO:0005840">
    <property type="term" value="C:ribosome"/>
    <property type="evidence" value="ECO:0007669"/>
    <property type="project" value="UniProtKB-KW"/>
</dbReference>
<dbReference type="GO" id="GO:0003735">
    <property type="term" value="F:structural constituent of ribosome"/>
    <property type="evidence" value="ECO:0007669"/>
    <property type="project" value="InterPro"/>
</dbReference>
<dbReference type="GO" id="GO:0006412">
    <property type="term" value="P:translation"/>
    <property type="evidence" value="ECO:0007669"/>
    <property type="project" value="UniProtKB-UniRule"/>
</dbReference>
<dbReference type="CDD" id="cd11382">
    <property type="entry name" value="Ribosomal_S8e"/>
    <property type="match status" value="1"/>
</dbReference>
<dbReference type="Gene3D" id="3.10.290.70">
    <property type="match status" value="1"/>
</dbReference>
<dbReference type="HAMAP" id="MF_00029">
    <property type="entry name" value="Ribosomal_eS8"/>
    <property type="match status" value="1"/>
</dbReference>
<dbReference type="InterPro" id="IPR001047">
    <property type="entry name" value="Ribosomal_eS8"/>
</dbReference>
<dbReference type="InterPro" id="IPR018283">
    <property type="entry name" value="Ribosomal_eS8_CS"/>
</dbReference>
<dbReference type="InterPro" id="IPR020919">
    <property type="entry name" value="Ribosomal_protein_eS8_arc"/>
</dbReference>
<dbReference type="InterPro" id="IPR022309">
    <property type="entry name" value="Ribosomal_Se8/biogenesis_NSA2"/>
</dbReference>
<dbReference type="NCBIfam" id="TIGR00307">
    <property type="entry name" value="eS8"/>
    <property type="match status" value="1"/>
</dbReference>
<dbReference type="PANTHER" id="PTHR10394">
    <property type="entry name" value="40S RIBOSOMAL PROTEIN S8"/>
    <property type="match status" value="1"/>
</dbReference>
<dbReference type="Pfam" id="PF01201">
    <property type="entry name" value="Ribosomal_S8e"/>
    <property type="match status" value="1"/>
</dbReference>
<dbReference type="PROSITE" id="PS01193">
    <property type="entry name" value="RIBOSOMAL_S8E"/>
    <property type="match status" value="1"/>
</dbReference>
<reference key="1">
    <citation type="journal article" date="2009" name="BMC Genomics">
        <title>The complete genome sequence of Staphylothermus marinus reveals differences in sulfur metabolism among heterotrophic Crenarchaeota.</title>
        <authorList>
            <person name="Anderson I.J."/>
            <person name="Dharmarajan L."/>
            <person name="Rodriguez J."/>
            <person name="Hooper S."/>
            <person name="Porat I."/>
            <person name="Ulrich L.E."/>
            <person name="Elkins J.G."/>
            <person name="Mavromatis K."/>
            <person name="Sun H."/>
            <person name="Land M."/>
            <person name="Lapidus A."/>
            <person name="Lucas S."/>
            <person name="Barry K."/>
            <person name="Huber H."/>
            <person name="Zhulin I.B."/>
            <person name="Whitman W.B."/>
            <person name="Mukhopadhyay B."/>
            <person name="Woese C."/>
            <person name="Bristow J."/>
            <person name="Kyrpides N."/>
        </authorList>
    </citation>
    <scope>NUCLEOTIDE SEQUENCE [LARGE SCALE GENOMIC DNA]</scope>
    <source>
        <strain>ATCC 43588 / DSM 3639 / JCM 9404 / F1</strain>
    </source>
</reference>
<reference key="2">
    <citation type="journal article" date="2009" name="Stand. Genomic Sci.">
        <title>Complete genome sequence of Staphylothermus marinus Stetter and Fiala 1986 type strain F1.</title>
        <authorList>
            <person name="Anderson I.J."/>
            <person name="Sun H."/>
            <person name="Lapidus A."/>
            <person name="Copeland A."/>
            <person name="Glavina Del Rio T."/>
            <person name="Tice H."/>
            <person name="Dalin E."/>
            <person name="Lucas S."/>
            <person name="Barry K."/>
            <person name="Land M."/>
            <person name="Richardson P."/>
            <person name="Huber H."/>
            <person name="Kyrpides N.C."/>
        </authorList>
    </citation>
    <scope>NUCLEOTIDE SEQUENCE [LARGE SCALE GENOMIC DNA]</scope>
    <source>
        <strain>ATCC 43588 / DSM 3639 / JCM 9404 / F1</strain>
    </source>
</reference>
<sequence>MAWYQGNDLRKPTGGKKTRHRKKRKHELGRPPTMTRFSVKEAQKIIRVRGGNLKIRLKRAVYVNVAVPNEGKVTKTRILEVVETPSNPQYARGNYITKGTIVRTELGLVKITSRPGQDGVLNGILLEK</sequence>
<feature type="chain" id="PRO_1000074404" description="Small ribosomal subunit protein eS8">
    <location>
        <begin position="1"/>
        <end position="128"/>
    </location>
</feature>
<feature type="region of interest" description="Disordered" evidence="2">
    <location>
        <begin position="1"/>
        <end position="31"/>
    </location>
</feature>
<feature type="compositionally biased region" description="Basic residues" evidence="2">
    <location>
        <begin position="13"/>
        <end position="27"/>
    </location>
</feature>
<accession>A3DNX9</accession>
<keyword id="KW-1185">Reference proteome</keyword>
<keyword id="KW-0687">Ribonucleoprotein</keyword>
<keyword id="KW-0689">Ribosomal protein</keyword>
<organism>
    <name type="scientific">Staphylothermus marinus (strain ATCC 43588 / DSM 3639 / JCM 9404 / F1)</name>
    <dbReference type="NCBI Taxonomy" id="399550"/>
    <lineage>
        <taxon>Archaea</taxon>
        <taxon>Thermoproteota</taxon>
        <taxon>Thermoprotei</taxon>
        <taxon>Desulfurococcales</taxon>
        <taxon>Desulfurococcaceae</taxon>
        <taxon>Staphylothermus</taxon>
    </lineage>
</organism>
<proteinExistence type="inferred from homology"/>
<comment type="subunit">
    <text evidence="1">Part of the 30S ribosomal subunit.</text>
</comment>
<comment type="similarity">
    <text evidence="1">Belongs to the eukaryotic ribosomal protein eS8 family.</text>
</comment>